<organism>
    <name type="scientific">Homo sapiens</name>
    <name type="common">Human</name>
    <dbReference type="NCBI Taxonomy" id="9606"/>
    <lineage>
        <taxon>Eukaryota</taxon>
        <taxon>Metazoa</taxon>
        <taxon>Chordata</taxon>
        <taxon>Craniata</taxon>
        <taxon>Vertebrata</taxon>
        <taxon>Euteleostomi</taxon>
        <taxon>Mammalia</taxon>
        <taxon>Eutheria</taxon>
        <taxon>Euarchontoglires</taxon>
        <taxon>Primates</taxon>
        <taxon>Haplorrhini</taxon>
        <taxon>Catarrhini</taxon>
        <taxon>Hominidae</taxon>
        <taxon>Homo</taxon>
    </lineage>
</organism>
<sequence>MKHYEVEILDAKTREKLCFLDKVEPHATIAEIKNLFTKTHPQWYPARQSLRLDPKGKSLKDEDVLQKLPVGTTATLYFRDLGAQISWVTVFLTEYAGPLFIYLLFYFRVPFIYGHKYDFTSSRHTVVHLACICHSFHYIKRLLETLFVHRFSHGTMPLRNIFKNCTYYWGFAAWMAYYINHPLYTPPTYGAQQVKLALAIFVICQLGNFSIHMALRDLRPAGSKTRKIPYPTKNPFTWLFLLVSCPNYTYEVGSWIGFAIMTQCLPVALFSLVGFTQMTIWAKGKHRSYLKEFRDYPPLRMPIIPFLL</sequence>
<evidence type="ECO:0000250" key="1">
    <source>
        <dbReference type="UniProtKB" id="Q64232"/>
    </source>
</evidence>
<evidence type="ECO:0000250" key="2">
    <source>
        <dbReference type="UniProtKB" id="Q9CY27"/>
    </source>
</evidence>
<evidence type="ECO:0000255" key="3"/>
<evidence type="ECO:0000269" key="4">
    <source>
    </source>
</evidence>
<evidence type="ECO:0000269" key="5">
    <source>
    </source>
</evidence>
<evidence type="ECO:0000269" key="6">
    <source>
    </source>
</evidence>
<evidence type="ECO:0000269" key="7">
    <source>
    </source>
</evidence>
<evidence type="ECO:0000269" key="8">
    <source>
    </source>
</evidence>
<evidence type="ECO:0000269" key="9">
    <source>
    </source>
</evidence>
<evidence type="ECO:0000303" key="10">
    <source>
    </source>
</evidence>
<evidence type="ECO:0000305" key="11"/>
<evidence type="ECO:0000305" key="12">
    <source>
    </source>
</evidence>
<evidence type="ECO:0000305" key="13">
    <source>
    </source>
</evidence>
<evidence type="ECO:0000305" key="14">
    <source>
    </source>
</evidence>
<evidence type="ECO:0000305" key="15">
    <source>
    </source>
</evidence>
<evidence type="ECO:0007744" key="16">
    <source>
    </source>
</evidence>
<evidence type="ECO:0007829" key="17">
    <source>
        <dbReference type="PDB" id="2DZJ"/>
    </source>
</evidence>
<proteinExistence type="evidence at protein level"/>
<protein>
    <recommendedName>
        <fullName evidence="11">Very-long-chain enoyl-CoA reductase</fullName>
        <ecNumber evidence="4">1.3.1.93</ecNumber>
    </recommendedName>
    <alternativeName>
        <fullName>Synaptic glycoprotein SC2</fullName>
    </alternativeName>
    <alternativeName>
        <fullName>Trans-2,3-enoyl-CoA reductase</fullName>
        <shortName>TER</shortName>
    </alternativeName>
</protein>
<dbReference type="EC" id="1.3.1.93" evidence="4"/>
<dbReference type="EMBL" id="AF038958">
    <property type="protein sequence ID" value="AAC39872.1"/>
    <property type="molecule type" value="mRNA"/>
</dbReference>
<dbReference type="EMBL" id="AF038959">
    <property type="protein sequence ID" value="AAC39873.1"/>
    <property type="molecule type" value="mRNA"/>
</dbReference>
<dbReference type="EMBL" id="AF222742">
    <property type="protein sequence ID" value="AAF32373.1"/>
    <property type="molecule type" value="mRNA"/>
</dbReference>
<dbReference type="EMBL" id="AK315412">
    <property type="protein sequence ID" value="BAG37802.1"/>
    <property type="molecule type" value="mRNA"/>
</dbReference>
<dbReference type="EMBL" id="BT007179">
    <property type="protein sequence ID" value="AAP35843.1"/>
    <property type="molecule type" value="mRNA"/>
</dbReference>
<dbReference type="EMBL" id="CR456892">
    <property type="protein sequence ID" value="CAG33173.1"/>
    <property type="molecule type" value="mRNA"/>
</dbReference>
<dbReference type="EMBL" id="BC000174">
    <property type="protein sequence ID" value="AAH00174.2"/>
    <property type="molecule type" value="mRNA"/>
</dbReference>
<dbReference type="EMBL" id="BC002425">
    <property type="protein sequence ID" value="AAH02425.1"/>
    <property type="molecule type" value="mRNA"/>
</dbReference>
<dbReference type="EMBL" id="BC005952">
    <property type="protein sequence ID" value="AAH05952.1"/>
    <property type="molecule type" value="mRNA"/>
</dbReference>
<dbReference type="EMBL" id="BC007801">
    <property type="protein sequence ID" value="AAH07801.1"/>
    <property type="molecule type" value="mRNA"/>
</dbReference>
<dbReference type="EMBL" id="BC013881">
    <property type="protein sequence ID" value="AAH13881.1"/>
    <property type="molecule type" value="mRNA"/>
</dbReference>
<dbReference type="CCDS" id="CCDS12313.1">
    <molecule id="Q9NZ01-1"/>
</dbReference>
<dbReference type="PIR" id="T50638">
    <property type="entry name" value="T50638"/>
</dbReference>
<dbReference type="PIR" id="T50639">
    <property type="entry name" value="T50639"/>
</dbReference>
<dbReference type="RefSeq" id="NP_001308099.1">
    <property type="nucleotide sequence ID" value="NM_001321170.1"/>
</dbReference>
<dbReference type="RefSeq" id="NP_612510.1">
    <molecule id="Q9NZ01-1"/>
    <property type="nucleotide sequence ID" value="NM_138501.6"/>
</dbReference>
<dbReference type="PDB" id="2DZJ">
    <property type="method" value="NMR"/>
    <property type="chains" value="A=1-81"/>
</dbReference>
<dbReference type="PDBsum" id="2DZJ"/>
<dbReference type="BMRB" id="Q9NZ01"/>
<dbReference type="SMR" id="Q9NZ01"/>
<dbReference type="BioGRID" id="114900">
    <property type="interactions" value="303"/>
</dbReference>
<dbReference type="FunCoup" id="Q9NZ01">
    <property type="interactions" value="2380"/>
</dbReference>
<dbReference type="IntAct" id="Q9NZ01">
    <property type="interactions" value="155"/>
</dbReference>
<dbReference type="MINT" id="Q9NZ01"/>
<dbReference type="STRING" id="9606.ENSP00000215567"/>
<dbReference type="SwissLipids" id="SLP:000000436"/>
<dbReference type="GlyCosmos" id="Q9NZ01">
    <property type="glycosylation" value="2 sites, No reported glycans"/>
</dbReference>
<dbReference type="GlyGen" id="Q9NZ01">
    <property type="glycosylation" value="3 sites, 1 O-linked glycan (1 site)"/>
</dbReference>
<dbReference type="iPTMnet" id="Q9NZ01"/>
<dbReference type="PhosphoSitePlus" id="Q9NZ01"/>
<dbReference type="SwissPalm" id="Q9NZ01"/>
<dbReference type="BioMuta" id="TECR"/>
<dbReference type="DMDM" id="20177939"/>
<dbReference type="jPOST" id="Q9NZ01"/>
<dbReference type="MassIVE" id="Q9NZ01"/>
<dbReference type="PaxDb" id="9606-ENSP00000215567"/>
<dbReference type="PeptideAtlas" id="Q9NZ01"/>
<dbReference type="PRIDE" id="Q9NZ01"/>
<dbReference type="ProteomicsDB" id="83310">
    <molecule id="Q9NZ01-1"/>
</dbReference>
<dbReference type="ProteomicsDB" id="83311">
    <molecule id="Q9NZ01-2"/>
</dbReference>
<dbReference type="Pumba" id="Q9NZ01"/>
<dbReference type="Antibodypedia" id="26742">
    <property type="antibodies" value="135 antibodies from 23 providers"/>
</dbReference>
<dbReference type="DNASU" id="9524"/>
<dbReference type="Ensembl" id="ENST00000215567.10">
    <molecule id="Q9NZ01-1"/>
    <property type="protein sequence ID" value="ENSP00000215567.4"/>
    <property type="gene ID" value="ENSG00000099797.15"/>
</dbReference>
<dbReference type="GeneID" id="9524"/>
<dbReference type="KEGG" id="hsa:9524"/>
<dbReference type="MANE-Select" id="ENST00000215567.10">
    <property type="protein sequence ID" value="ENSP00000215567.4"/>
    <property type="RefSeq nucleotide sequence ID" value="NM_138501.6"/>
    <property type="RefSeq protein sequence ID" value="NP_612510.1"/>
</dbReference>
<dbReference type="UCSC" id="uc002mza.4">
    <molecule id="Q9NZ01-1"/>
    <property type="organism name" value="human"/>
</dbReference>
<dbReference type="AGR" id="HGNC:4551"/>
<dbReference type="CTD" id="9524"/>
<dbReference type="DisGeNET" id="9524"/>
<dbReference type="GeneCards" id="TECR"/>
<dbReference type="HGNC" id="HGNC:4551">
    <property type="gene designation" value="TECR"/>
</dbReference>
<dbReference type="HPA" id="ENSG00000099797">
    <property type="expression patterns" value="Low tissue specificity"/>
</dbReference>
<dbReference type="MalaCards" id="TECR"/>
<dbReference type="MIM" id="610057">
    <property type="type" value="gene"/>
</dbReference>
<dbReference type="MIM" id="614020">
    <property type="type" value="phenotype"/>
</dbReference>
<dbReference type="neXtProt" id="NX_Q9NZ01"/>
<dbReference type="OpenTargets" id="ENSG00000099797"/>
<dbReference type="Orphanet" id="88616">
    <property type="disease" value="Autosomal recessive non-syndromic intellectual disability"/>
</dbReference>
<dbReference type="PharmGKB" id="PA28946"/>
<dbReference type="VEuPathDB" id="HostDB:ENSG00000099797"/>
<dbReference type="eggNOG" id="KOG1639">
    <property type="taxonomic scope" value="Eukaryota"/>
</dbReference>
<dbReference type="GeneTree" id="ENSGT00950000182886"/>
<dbReference type="HOGENOM" id="CLU_059260_1_0_1"/>
<dbReference type="InParanoid" id="Q9NZ01"/>
<dbReference type="OMA" id="FSQSTMP"/>
<dbReference type="OrthoDB" id="540503at2759"/>
<dbReference type="PAN-GO" id="Q9NZ01">
    <property type="GO annotations" value="2 GO annotations based on evolutionary models"/>
</dbReference>
<dbReference type="PhylomeDB" id="Q9NZ01"/>
<dbReference type="TreeFam" id="TF300908"/>
<dbReference type="BioCyc" id="MetaCyc:ENSG00000099797-MONOMER"/>
<dbReference type="BRENDA" id="1.3.1.93">
    <property type="organism ID" value="2681"/>
</dbReference>
<dbReference type="PathwayCommons" id="Q9NZ01"/>
<dbReference type="Reactome" id="R-HSA-75876">
    <property type="pathway name" value="Synthesis of very long-chain fatty acyl-CoAs"/>
</dbReference>
<dbReference type="SignaLink" id="Q9NZ01"/>
<dbReference type="UniPathway" id="UPA00094"/>
<dbReference type="UniPathway" id="UPA00222"/>
<dbReference type="BioGRID-ORCS" id="9524">
    <property type="hits" value="79 hits in 1156 CRISPR screens"/>
</dbReference>
<dbReference type="ChiTaRS" id="TECR">
    <property type="organism name" value="human"/>
</dbReference>
<dbReference type="EvolutionaryTrace" id="Q9NZ01"/>
<dbReference type="GeneWiki" id="TECR"/>
<dbReference type="GenomeRNAi" id="9524"/>
<dbReference type="Pharos" id="Q9NZ01">
    <property type="development level" value="Tbio"/>
</dbReference>
<dbReference type="PRO" id="PR:Q9NZ01"/>
<dbReference type="Proteomes" id="UP000005640">
    <property type="component" value="Chromosome 19"/>
</dbReference>
<dbReference type="RNAct" id="Q9NZ01">
    <property type="molecule type" value="protein"/>
</dbReference>
<dbReference type="Bgee" id="ENSG00000099797">
    <property type="expression patterns" value="Expressed in lower esophagus mucosa and 126 other cell types or tissues"/>
</dbReference>
<dbReference type="ExpressionAtlas" id="Q9NZ01">
    <property type="expression patterns" value="baseline and differential"/>
</dbReference>
<dbReference type="GO" id="GO:0005783">
    <property type="term" value="C:endoplasmic reticulum"/>
    <property type="evidence" value="ECO:0000314"/>
    <property type="project" value="HPA"/>
</dbReference>
<dbReference type="GO" id="GO:0005789">
    <property type="term" value="C:endoplasmic reticulum membrane"/>
    <property type="evidence" value="ECO:0000314"/>
    <property type="project" value="UniProtKB"/>
</dbReference>
<dbReference type="GO" id="GO:0005634">
    <property type="term" value="C:nucleus"/>
    <property type="evidence" value="ECO:0007005"/>
    <property type="project" value="UniProtKB"/>
</dbReference>
<dbReference type="GO" id="GO:0016491">
    <property type="term" value="F:oxidoreductase activity"/>
    <property type="evidence" value="ECO:0000318"/>
    <property type="project" value="GO_Central"/>
</dbReference>
<dbReference type="GO" id="GO:0102758">
    <property type="term" value="F:very-long-chain enoyl-CoA reductase activity"/>
    <property type="evidence" value="ECO:0000314"/>
    <property type="project" value="FlyBase"/>
</dbReference>
<dbReference type="GO" id="GO:0017099">
    <property type="term" value="F:very-long-chain fatty acyl-CoA dehydrogenase activity"/>
    <property type="evidence" value="ECO:0000304"/>
    <property type="project" value="Reactome"/>
</dbReference>
<dbReference type="GO" id="GO:0030497">
    <property type="term" value="P:fatty acid elongation"/>
    <property type="evidence" value="ECO:0000314"/>
    <property type="project" value="UniProtKB"/>
</dbReference>
<dbReference type="GO" id="GO:0035338">
    <property type="term" value="P:long-chain fatty-acyl-CoA biosynthetic process"/>
    <property type="evidence" value="ECO:0000304"/>
    <property type="project" value="Reactome"/>
</dbReference>
<dbReference type="GO" id="GO:0006665">
    <property type="term" value="P:sphingolipid metabolic process"/>
    <property type="evidence" value="ECO:0000315"/>
    <property type="project" value="UniProtKB"/>
</dbReference>
<dbReference type="GO" id="GO:0042761">
    <property type="term" value="P:very long-chain fatty acid biosynthetic process"/>
    <property type="evidence" value="ECO:0000314"/>
    <property type="project" value="UniProtKB"/>
</dbReference>
<dbReference type="CDD" id="cd17124">
    <property type="entry name" value="Ubl_TECR"/>
    <property type="match status" value="1"/>
</dbReference>
<dbReference type="FunFam" id="3.10.20.90:FF:000083">
    <property type="entry name" value="Trans-2,3-enoyl-CoA reductase b"/>
    <property type="match status" value="1"/>
</dbReference>
<dbReference type="Gene3D" id="3.10.20.90">
    <property type="entry name" value="Phosphatidylinositol 3-kinase Catalytic Subunit, Chain A, domain 1"/>
    <property type="match status" value="1"/>
</dbReference>
<dbReference type="InterPro" id="IPR001104">
    <property type="entry name" value="3-oxo-5_a-steroid_4-DH_C"/>
</dbReference>
<dbReference type="InterPro" id="IPR039357">
    <property type="entry name" value="SRD5A/TECR"/>
</dbReference>
<dbReference type="InterPro" id="IPR049127">
    <property type="entry name" value="TECR-like_N"/>
</dbReference>
<dbReference type="InterPro" id="IPR029071">
    <property type="entry name" value="Ubiquitin-like_domsf"/>
</dbReference>
<dbReference type="PANTHER" id="PTHR10556">
    <property type="entry name" value="3-OXO-5-ALPHA-STEROID 4-DEHYDROGENASE"/>
    <property type="match status" value="1"/>
</dbReference>
<dbReference type="PANTHER" id="PTHR10556:SF31">
    <property type="entry name" value="VERY-LONG-CHAIN ENOYL-COA REDUCTASE"/>
    <property type="match status" value="1"/>
</dbReference>
<dbReference type="Pfam" id="PF02544">
    <property type="entry name" value="Steroid_dh"/>
    <property type="match status" value="1"/>
</dbReference>
<dbReference type="Pfam" id="PF21696">
    <property type="entry name" value="TECR_N"/>
    <property type="match status" value="1"/>
</dbReference>
<dbReference type="SUPFAM" id="SSF54236">
    <property type="entry name" value="Ubiquitin-like"/>
    <property type="match status" value="1"/>
</dbReference>
<dbReference type="PROSITE" id="PS50244">
    <property type="entry name" value="S5A_REDUCTASE"/>
    <property type="match status" value="1"/>
</dbReference>
<gene>
    <name type="primary">TECR</name>
    <name type="synonym">GPSN2</name>
    <name type="synonym">SC2</name>
</gene>
<feature type="chain" id="PRO_0000213683" description="Very-long-chain enoyl-CoA reductase">
    <location>
        <begin position="1"/>
        <end position="308"/>
    </location>
</feature>
<feature type="topological domain" description="Cytoplasmic" evidence="15">
    <location>
        <begin position="1"/>
        <end position="86"/>
    </location>
</feature>
<feature type="transmembrane region" description="Helical" evidence="15">
    <location>
        <begin position="87"/>
        <end position="106"/>
    </location>
</feature>
<feature type="topological domain" description="Lumenal" evidence="15">
    <location>
        <begin position="107"/>
        <end position="124"/>
    </location>
</feature>
<feature type="transmembrane region" description="Helical" evidence="15">
    <location>
        <begin position="125"/>
        <end position="147"/>
    </location>
</feature>
<feature type="topological domain" description="Cytoplasmic" evidence="15">
    <location>
        <begin position="148"/>
        <end position="158"/>
    </location>
</feature>
<feature type="transmembrane region" description="Helical" evidence="15">
    <location>
        <begin position="159"/>
        <end position="180"/>
    </location>
</feature>
<feature type="topological domain" description="Lumenal" evidence="15">
    <location>
        <begin position="181"/>
        <end position="189"/>
    </location>
</feature>
<feature type="transmembrane region" description="Helical" evidence="15">
    <location>
        <begin position="190"/>
        <end position="216"/>
    </location>
</feature>
<feature type="topological domain" description="Cytoplasmic" evidence="15">
    <location>
        <begin position="217"/>
        <end position="245"/>
    </location>
</feature>
<feature type="transmembrane region" description="Helical" evidence="15">
    <location>
        <begin position="246"/>
        <end position="262"/>
    </location>
</feature>
<feature type="topological domain" description="Lumenal" evidence="15">
    <location>
        <begin position="263"/>
        <end position="264"/>
    </location>
</feature>
<feature type="transmembrane region" description="Helical" evidence="15">
    <location>
        <begin position="265"/>
        <end position="292"/>
    </location>
</feature>
<feature type="topological domain" description="Cytoplasmic" evidence="15">
    <location>
        <begin position="293"/>
        <end position="308"/>
    </location>
</feature>
<feature type="modified residue" description="N6-acetyllysine" evidence="16">
    <location>
        <position position="22"/>
    </location>
</feature>
<feature type="modified residue" description="Phosphoserine" evidence="2">
    <location>
        <position position="58"/>
    </location>
</feature>
<feature type="modified residue" description="N6-acetyllysine" evidence="2">
    <location>
        <position position="60"/>
    </location>
</feature>
<feature type="splice variant" id="VSP_005957" description="In isoform 2." evidence="10">
    <location>
        <begin position="20"/>
        <end position="170"/>
    </location>
</feature>
<feature type="sequence variant" id="VAR_065918" description="In MRT14; reduced enzyme activity; reduced protein stability; no effect on subcellular localization; dbSNP:rs199469705." evidence="6 7">
    <original>P</original>
    <variation>L</variation>
    <location>
        <position position="182"/>
    </location>
</feature>
<feature type="sequence conflict" description="In Ref. 1; AAC39872." evidence="11" ref="1">
    <original>TTAT</original>
    <variation>PRAH</variation>
    <location>
        <begin position="72"/>
        <end position="75"/>
    </location>
</feature>
<feature type="sequence conflict" description="In Ref. 1; AAC39872/AAC39873." evidence="11" ref="1">
    <original>Y</original>
    <variation>C</variation>
    <location>
        <position position="248"/>
    </location>
</feature>
<feature type="strand" evidence="17">
    <location>
        <begin position="4"/>
        <end position="13"/>
    </location>
</feature>
<feature type="strand" evidence="17">
    <location>
        <begin position="18"/>
        <end position="23"/>
    </location>
</feature>
<feature type="helix" evidence="17">
    <location>
        <begin position="29"/>
        <end position="39"/>
    </location>
</feature>
<feature type="strand" evidence="17">
    <location>
        <begin position="41"/>
        <end position="43"/>
    </location>
</feature>
<feature type="turn" evidence="17">
    <location>
        <begin position="45"/>
        <end position="47"/>
    </location>
</feature>
<feature type="strand" evidence="17">
    <location>
        <begin position="50"/>
        <end position="53"/>
    </location>
</feature>
<feature type="turn" evidence="17">
    <location>
        <begin position="65"/>
        <end position="67"/>
    </location>
</feature>
<feature type="strand" evidence="17">
    <location>
        <begin position="72"/>
        <end position="78"/>
    </location>
</feature>
<reference key="1">
    <citation type="journal article" date="1998" name="Proc. Natl. Acad. Sci. U.S.A.">
        <title>Identification of genes expressed in human CD34(+) hematopoietic stem/progenitor cells by expressed sequence tags and efficient full-length cDNA cloning.</title>
        <authorList>
            <person name="Mao M."/>
            <person name="Fu G."/>
            <person name="Wu J.-S."/>
            <person name="Zhang Q.-H."/>
            <person name="Zhou J."/>
            <person name="Kan L.-X."/>
            <person name="Huang Q.-H."/>
            <person name="He K.-L."/>
            <person name="Gu B.-W."/>
            <person name="Han Z.-G."/>
            <person name="Shen Y."/>
            <person name="Gu J."/>
            <person name="Yu Y.-P."/>
            <person name="Xu S.-H."/>
            <person name="Wang Y.-X."/>
            <person name="Chen S.-J."/>
            <person name="Chen Z."/>
        </authorList>
    </citation>
    <scope>NUCLEOTIDE SEQUENCE [LARGE SCALE MRNA] (ISOFORMS 1 AND 2)</scope>
    <source>
        <tissue>Umbilical cord blood</tissue>
    </source>
</reference>
<reference key="2">
    <citation type="submission" date="2000-01" db="EMBL/GenBank/DDBJ databases">
        <title>A catalog of genes in human dermal papilla cells as identified by expressed sequence tags.</title>
        <authorList>
            <person name="Seo H.C."/>
            <person name="Kim M.K."/>
            <person name="Kim Y.H."/>
            <person name="Seo J.M."/>
            <person name="Lee H.M."/>
            <person name="Chung H.J."/>
            <person name="Sohn M.Y."/>
            <person name="Hwang S.Y."/>
            <person name="Im S.U."/>
            <person name="Jung E.J."/>
            <person name="Kim J.C."/>
        </authorList>
    </citation>
    <scope>NUCLEOTIDE SEQUENCE [LARGE SCALE MRNA] (ISOFORM 1)</scope>
    <source>
        <tissue>Hair follicle dermal papilla</tissue>
    </source>
</reference>
<reference key="3">
    <citation type="journal article" date="2004" name="Nat. Genet.">
        <title>Complete sequencing and characterization of 21,243 full-length human cDNAs.</title>
        <authorList>
            <person name="Ota T."/>
            <person name="Suzuki Y."/>
            <person name="Nishikawa T."/>
            <person name="Otsuki T."/>
            <person name="Sugiyama T."/>
            <person name="Irie R."/>
            <person name="Wakamatsu A."/>
            <person name="Hayashi K."/>
            <person name="Sato H."/>
            <person name="Nagai K."/>
            <person name="Kimura K."/>
            <person name="Makita H."/>
            <person name="Sekine M."/>
            <person name="Obayashi M."/>
            <person name="Nishi T."/>
            <person name="Shibahara T."/>
            <person name="Tanaka T."/>
            <person name="Ishii S."/>
            <person name="Yamamoto J."/>
            <person name="Saito K."/>
            <person name="Kawai Y."/>
            <person name="Isono Y."/>
            <person name="Nakamura Y."/>
            <person name="Nagahari K."/>
            <person name="Murakami K."/>
            <person name="Yasuda T."/>
            <person name="Iwayanagi T."/>
            <person name="Wagatsuma M."/>
            <person name="Shiratori A."/>
            <person name="Sudo H."/>
            <person name="Hosoiri T."/>
            <person name="Kaku Y."/>
            <person name="Kodaira H."/>
            <person name="Kondo H."/>
            <person name="Sugawara M."/>
            <person name="Takahashi M."/>
            <person name="Kanda K."/>
            <person name="Yokoi T."/>
            <person name="Furuya T."/>
            <person name="Kikkawa E."/>
            <person name="Omura Y."/>
            <person name="Abe K."/>
            <person name="Kamihara K."/>
            <person name="Katsuta N."/>
            <person name="Sato K."/>
            <person name="Tanikawa M."/>
            <person name="Yamazaki M."/>
            <person name="Ninomiya K."/>
            <person name="Ishibashi T."/>
            <person name="Yamashita H."/>
            <person name="Murakawa K."/>
            <person name="Fujimori K."/>
            <person name="Tanai H."/>
            <person name="Kimata M."/>
            <person name="Watanabe M."/>
            <person name="Hiraoka S."/>
            <person name="Chiba Y."/>
            <person name="Ishida S."/>
            <person name="Ono Y."/>
            <person name="Takiguchi S."/>
            <person name="Watanabe S."/>
            <person name="Yosida M."/>
            <person name="Hotuta T."/>
            <person name="Kusano J."/>
            <person name="Kanehori K."/>
            <person name="Takahashi-Fujii A."/>
            <person name="Hara H."/>
            <person name="Tanase T.-O."/>
            <person name="Nomura Y."/>
            <person name="Togiya S."/>
            <person name="Komai F."/>
            <person name="Hara R."/>
            <person name="Takeuchi K."/>
            <person name="Arita M."/>
            <person name="Imose N."/>
            <person name="Musashino K."/>
            <person name="Yuuki H."/>
            <person name="Oshima A."/>
            <person name="Sasaki N."/>
            <person name="Aotsuka S."/>
            <person name="Yoshikawa Y."/>
            <person name="Matsunawa H."/>
            <person name="Ichihara T."/>
            <person name="Shiohata N."/>
            <person name="Sano S."/>
            <person name="Moriya S."/>
            <person name="Momiyama H."/>
            <person name="Satoh N."/>
            <person name="Takami S."/>
            <person name="Terashima Y."/>
            <person name="Suzuki O."/>
            <person name="Nakagawa S."/>
            <person name="Senoh A."/>
            <person name="Mizoguchi H."/>
            <person name="Goto Y."/>
            <person name="Shimizu F."/>
            <person name="Wakebe H."/>
            <person name="Hishigaki H."/>
            <person name="Watanabe T."/>
            <person name="Sugiyama A."/>
            <person name="Takemoto M."/>
            <person name="Kawakami B."/>
            <person name="Yamazaki M."/>
            <person name="Watanabe K."/>
            <person name="Kumagai A."/>
            <person name="Itakura S."/>
            <person name="Fukuzumi Y."/>
            <person name="Fujimori Y."/>
            <person name="Komiyama M."/>
            <person name="Tashiro H."/>
            <person name="Tanigami A."/>
            <person name="Fujiwara T."/>
            <person name="Ono T."/>
            <person name="Yamada K."/>
            <person name="Fujii Y."/>
            <person name="Ozaki K."/>
            <person name="Hirao M."/>
            <person name="Ohmori Y."/>
            <person name="Kawabata A."/>
            <person name="Hikiji T."/>
            <person name="Kobatake N."/>
            <person name="Inagaki H."/>
            <person name="Ikema Y."/>
            <person name="Okamoto S."/>
            <person name="Okitani R."/>
            <person name="Kawakami T."/>
            <person name="Noguchi S."/>
            <person name="Itoh T."/>
            <person name="Shigeta K."/>
            <person name="Senba T."/>
            <person name="Matsumura K."/>
            <person name="Nakajima Y."/>
            <person name="Mizuno T."/>
            <person name="Morinaga M."/>
            <person name="Sasaki M."/>
            <person name="Togashi T."/>
            <person name="Oyama M."/>
            <person name="Hata H."/>
            <person name="Watanabe M."/>
            <person name="Komatsu T."/>
            <person name="Mizushima-Sugano J."/>
            <person name="Satoh T."/>
            <person name="Shirai Y."/>
            <person name="Takahashi Y."/>
            <person name="Nakagawa K."/>
            <person name="Okumura K."/>
            <person name="Nagase T."/>
            <person name="Nomura N."/>
            <person name="Kikuchi H."/>
            <person name="Masuho Y."/>
            <person name="Yamashita R."/>
            <person name="Nakai K."/>
            <person name="Yada T."/>
            <person name="Nakamura Y."/>
            <person name="Ohara O."/>
            <person name="Isogai T."/>
            <person name="Sugano S."/>
        </authorList>
    </citation>
    <scope>NUCLEOTIDE SEQUENCE [LARGE SCALE MRNA] (ISOFORM 1)</scope>
    <source>
        <tissue>Tongue</tissue>
    </source>
</reference>
<reference key="4">
    <citation type="submission" date="2003-05" db="EMBL/GenBank/DDBJ databases">
        <title>Cloning of human full-length CDSs in BD Creator(TM) system donor vector.</title>
        <authorList>
            <person name="Kalnine N."/>
            <person name="Chen X."/>
            <person name="Rolfs A."/>
            <person name="Halleck A."/>
            <person name="Hines L."/>
            <person name="Eisenstein S."/>
            <person name="Koundinya M."/>
            <person name="Raphael J."/>
            <person name="Moreira D."/>
            <person name="Kelley T."/>
            <person name="LaBaer J."/>
            <person name="Lin Y."/>
            <person name="Phelan M."/>
            <person name="Farmer A."/>
        </authorList>
    </citation>
    <scope>NUCLEOTIDE SEQUENCE [LARGE SCALE MRNA] (ISOFORM 1)</scope>
</reference>
<reference key="5">
    <citation type="submission" date="2004-06" db="EMBL/GenBank/DDBJ databases">
        <title>Cloning of human full open reading frames in Gateway(TM) system entry vector (pDONR201).</title>
        <authorList>
            <person name="Ebert L."/>
            <person name="Schick M."/>
            <person name="Neubert P."/>
            <person name="Schatten R."/>
            <person name="Henze S."/>
            <person name="Korn B."/>
        </authorList>
    </citation>
    <scope>NUCLEOTIDE SEQUENCE [LARGE SCALE MRNA] (ISOFORM 1)</scope>
</reference>
<reference key="6">
    <citation type="journal article" date="2004" name="Genome Res.">
        <title>The status, quality, and expansion of the NIH full-length cDNA project: the Mammalian Gene Collection (MGC).</title>
        <authorList>
            <consortium name="The MGC Project Team"/>
        </authorList>
    </citation>
    <scope>NUCLEOTIDE SEQUENCE [LARGE SCALE MRNA] (ISOFORM 1)</scope>
    <source>
        <tissue>Brain</tissue>
        <tissue>Cervix</tissue>
        <tissue>Ovary</tissue>
        <tissue>Prostate</tissue>
    </source>
</reference>
<reference key="7">
    <citation type="journal article" date="2003" name="J. Biol. Chem.">
        <title>Identification of two mammalian reductases involved in the two-carbon fatty acyl elongation cascade.</title>
        <authorList>
            <person name="Moon Y.-A."/>
            <person name="Horton J.D."/>
        </authorList>
    </citation>
    <scope>FUNCTION</scope>
    <scope>CATALYTIC ACTIVITY</scope>
    <scope>PATHWAY</scope>
    <scope>SUBCELLULAR LOCATION</scope>
    <scope>TISSUE SPECIFICITY</scope>
</reference>
<reference key="8">
    <citation type="journal article" date="2009" name="Science">
        <title>Lysine acetylation targets protein complexes and co-regulates major cellular functions.</title>
        <authorList>
            <person name="Choudhary C."/>
            <person name="Kumar C."/>
            <person name="Gnad F."/>
            <person name="Nielsen M.L."/>
            <person name="Rehman M."/>
            <person name="Walther T.C."/>
            <person name="Olsen J.V."/>
            <person name="Mann M."/>
        </authorList>
    </citation>
    <scope>ACETYLATION [LARGE SCALE ANALYSIS] AT LYS-22</scope>
    <scope>IDENTIFICATION BY MASS SPECTROMETRY [LARGE SCALE ANALYSIS]</scope>
</reference>
<reference key="9">
    <citation type="journal article" date="2010" name="Proc. Natl. Acad. Sci. U.S.A.">
        <title>ELOVL1 production of C24 acyl-CoAs is linked to C24 sphingolipid synthesis.</title>
        <authorList>
            <person name="Ohno Y."/>
            <person name="Suto S."/>
            <person name="Yamanaka M."/>
            <person name="Mizutani Y."/>
            <person name="Mitsutake S."/>
            <person name="Igarashi Y."/>
            <person name="Sassa T."/>
            <person name="Kihara A."/>
        </authorList>
    </citation>
    <scope>INTERACTION WITH ELOVL1 AND LASS2</scope>
</reference>
<reference key="10">
    <citation type="journal article" date="2011" name="BMC Syst. Biol.">
        <title>Initial characterization of the human central proteome.</title>
        <authorList>
            <person name="Burkard T.R."/>
            <person name="Planyavsky M."/>
            <person name="Kaupe I."/>
            <person name="Breitwieser F.P."/>
            <person name="Buerckstuemmer T."/>
            <person name="Bennett K.L."/>
            <person name="Superti-Furga G."/>
            <person name="Colinge J."/>
        </authorList>
    </citation>
    <scope>IDENTIFICATION BY MASS SPECTROMETRY [LARGE SCALE ANALYSIS]</scope>
</reference>
<reference key="11">
    <citation type="journal article" date="2014" name="J. Biol. Chem.">
        <title>Dual functions of the trans-2-enoyl-CoA reductase TER in the sphingosine 1-phosphate metabolic pathway and in fatty acid elongation.</title>
        <authorList>
            <person name="Wakashima T."/>
            <person name="Abe K."/>
            <person name="Kihara A."/>
        </authorList>
    </citation>
    <scope>FUNCTION</scope>
    <scope>CATALYTIC ACTIVITY</scope>
</reference>
<reference key="12">
    <citation type="journal article" date="2015" name="Proteomics">
        <title>N-terminome analysis of the human mitochondrial proteome.</title>
        <authorList>
            <person name="Vaca Jacome A.S."/>
            <person name="Rabilloud T."/>
            <person name="Schaeffer-Reiss C."/>
            <person name="Rompais M."/>
            <person name="Ayoub D."/>
            <person name="Lane L."/>
            <person name="Bairoch A."/>
            <person name="Van Dorsselaer A."/>
            <person name="Carapito C."/>
        </authorList>
    </citation>
    <scope>IDENTIFICATION BY MASS SPECTROMETRY [LARGE SCALE ANALYSIS]</scope>
</reference>
<reference key="13">
    <citation type="journal article" date="2024" name="Biochem. Biophys. Res. Commun.">
        <title>The 3-hydroxyacyl-CoA dehydratase 1/2 form complex with trans-2-enoyl-CoA reductase involved in substrates transfer in very long chain fatty acid elongation.</title>
        <authorList>
            <person name="Zhou Y."/>
            <person name="Lv R."/>
            <person name="Ye R.D."/>
            <person name="Ren R."/>
            <person name="Yu L."/>
        </authorList>
    </citation>
    <scope>INTERACTION WITH ELOVL1; ELOVL2; ELOVL3; ELOVL5; ELOVL7; HACD1 AND HACD2</scope>
    <scope>TOPOLOGY</scope>
</reference>
<reference key="14">
    <citation type="submission" date="2007-03" db="PDB data bank">
        <title>Solution structure of the N-terminal ubiquitin-like domain in human synaptic glycoprotein SC2.</title>
        <authorList>
            <consortium name="RIKEN structural genomics initiative (RSGI)"/>
        </authorList>
    </citation>
    <scope>STRUCTURE BY NMR OF 1-81</scope>
</reference>
<reference key="15">
    <citation type="journal article" date="2011" name="Hum. Mol. Genet.">
        <title>Exome sequencing reveals a novel mutation for autosomal recessive non-syndromic mental retardation in the TECR gene on chromosome 19p13.</title>
        <authorList>
            <person name="Caliskan M."/>
            <person name="Chong J.X."/>
            <person name="Uricchio L."/>
            <person name="Anderson R."/>
            <person name="Chen P."/>
            <person name="Sougnez C."/>
            <person name="Garimella K."/>
            <person name="Gabriel S.B."/>
            <person name="dePristo M.A."/>
            <person name="Shakir K."/>
            <person name="Matern D."/>
            <person name="Das S."/>
            <person name="Waggoner D."/>
            <person name="Nicolae D.L."/>
            <person name="Ober C."/>
        </authorList>
    </citation>
    <scope>VARIANT MRT14 LEU-182</scope>
</reference>
<reference key="16">
    <citation type="journal article" date="2013" name="J. Biol. Chem.">
        <title>Mutation for nonsyndromic mental retardation in the trans-2-enoyl-CoA reductase TER gene involved in fatty acid elongation impairs the enzyme activity and stability, leading to change in sphingolipid profile.</title>
        <authorList>
            <person name="Abe K."/>
            <person name="Ohno Y."/>
            <person name="Sassa T."/>
            <person name="Taguchi R."/>
            <person name="Caliskan M."/>
            <person name="Ober C."/>
            <person name="Kihara A."/>
        </authorList>
    </citation>
    <scope>CHARACTERIZATION OF VARIANT MRT14 LEU-182</scope>
    <scope>CATALYTIC ACTIVITY</scope>
    <scope>SUBCELLULAR LOCATION</scope>
</reference>
<name>TECR_HUMAN</name>
<accession>Q9NZ01</accession>
<accession>B2RD55</accession>
<accession>O75350</accession>
<accession>Q6IBB2</accession>
<accession>Q9BWK3</accession>
<accession>Q9Y6P0</accession>
<keyword id="KW-0002">3D-structure</keyword>
<keyword id="KW-0007">Acetylation</keyword>
<keyword id="KW-0025">Alternative splicing</keyword>
<keyword id="KW-0225">Disease variant</keyword>
<keyword id="KW-0256">Endoplasmic reticulum</keyword>
<keyword id="KW-0275">Fatty acid biosynthesis</keyword>
<keyword id="KW-0276">Fatty acid metabolism</keyword>
<keyword id="KW-0991">Intellectual disability</keyword>
<keyword id="KW-0444">Lipid biosynthesis</keyword>
<keyword id="KW-0443">Lipid metabolism</keyword>
<keyword id="KW-0472">Membrane</keyword>
<keyword id="KW-0521">NADP</keyword>
<keyword id="KW-0560">Oxidoreductase</keyword>
<keyword id="KW-0597">Phosphoprotein</keyword>
<keyword id="KW-1267">Proteomics identification</keyword>
<keyword id="KW-1185">Reference proteome</keyword>
<keyword id="KW-0746">Sphingolipid metabolism</keyword>
<keyword id="KW-0812">Transmembrane</keyword>
<keyword id="KW-1133">Transmembrane helix</keyword>
<comment type="function">
    <text evidence="4 8">Involved in both the production of very long-chain fatty acids for sphingolipid synthesis and the degradation of the sphingosine moiety in sphingolipids through the sphingosine 1-phosphate metabolic pathway (PubMed:25049234). Catalyzes the last of the four reactions of the long-chain fatty acids elongation cycle (PubMed:12482854). This endoplasmic reticulum-bound enzymatic process, allows the addition of 2 carbons to the chain of long- and very long-chain fatty acids/VLCFAs per cycle (PubMed:12482854). This enzyme reduces the trans-2,3-enoyl-CoA fatty acid intermediate to an acyl-CoA that can be further elongated by entering a new cycle of elongation (PubMed:12482854). Thereby, it participates in the production of VLCFAs of different chain lengths that are involved in multiple biological processes as precursors of membrane lipids and lipid mediators (PubMed:12482854). Catalyzes the saturation step of the sphingosine 1-phosphate metabolic pathway, the conversion of trans-2-hexadecenoyl-CoA to palmitoyl-CoA (PubMed:25049234).</text>
</comment>
<comment type="catalytic activity">
    <reaction evidence="4">
        <text>a very-long-chain 2,3-saturated fatty acyl-CoA + NADP(+) = a very-long-chain (2E)-enoyl-CoA + NADPH + H(+)</text>
        <dbReference type="Rhea" id="RHEA:14473"/>
        <dbReference type="ChEBI" id="CHEBI:15378"/>
        <dbReference type="ChEBI" id="CHEBI:57783"/>
        <dbReference type="ChEBI" id="CHEBI:58349"/>
        <dbReference type="ChEBI" id="CHEBI:83724"/>
        <dbReference type="ChEBI" id="CHEBI:83728"/>
        <dbReference type="EC" id="1.3.1.93"/>
    </reaction>
    <physiologicalReaction direction="right-to-left" evidence="12">
        <dbReference type="Rhea" id="RHEA:14475"/>
    </physiologicalReaction>
</comment>
<comment type="catalytic activity">
    <reaction evidence="4">
        <text>octadecanoyl-CoA + NADP(+) = (2E)-octadecenoyl-CoA + NADPH + H(+)</text>
        <dbReference type="Rhea" id="RHEA:35351"/>
        <dbReference type="ChEBI" id="CHEBI:15378"/>
        <dbReference type="ChEBI" id="CHEBI:57394"/>
        <dbReference type="ChEBI" id="CHEBI:57783"/>
        <dbReference type="ChEBI" id="CHEBI:58349"/>
        <dbReference type="ChEBI" id="CHEBI:71412"/>
    </reaction>
    <physiologicalReaction direction="right-to-left" evidence="12">
        <dbReference type="Rhea" id="RHEA:35353"/>
    </physiologicalReaction>
</comment>
<comment type="catalytic activity">
    <reaction evidence="4">
        <text>(2E,7Z,10Z,13Z,16Z)-docosapentaenoyl-CoA + NADPH + H(+) = (7Z,10Z,13Z,16Z)-docosatetraenoyl-CoA + NADP(+)</text>
        <dbReference type="Rhea" id="RHEA:39331"/>
        <dbReference type="ChEBI" id="CHEBI:15378"/>
        <dbReference type="ChEBI" id="CHEBI:57783"/>
        <dbReference type="ChEBI" id="CHEBI:58349"/>
        <dbReference type="ChEBI" id="CHEBI:73856"/>
        <dbReference type="ChEBI" id="CHEBI:76416"/>
    </reaction>
    <physiologicalReaction direction="left-to-right" evidence="12">
        <dbReference type="Rhea" id="RHEA:39332"/>
    </physiologicalReaction>
</comment>
<comment type="catalytic activity">
    <reaction evidence="4">
        <text>(2E,7Z,10Z,13Z,16Z,19Z)-docosahexaenoyl-CoA + NADPH + H(+) = (7Z,10Z,13Z,16Z,19Z)-docosapentaenoyl-CoA + NADP(+)</text>
        <dbReference type="Rhea" id="RHEA:39467"/>
        <dbReference type="ChEBI" id="CHEBI:15378"/>
        <dbReference type="ChEBI" id="CHEBI:57783"/>
        <dbReference type="ChEBI" id="CHEBI:58349"/>
        <dbReference type="ChEBI" id="CHEBI:73870"/>
        <dbReference type="ChEBI" id="CHEBI:76461"/>
    </reaction>
    <physiologicalReaction direction="left-to-right" evidence="12">
        <dbReference type="Rhea" id="RHEA:39468"/>
    </physiologicalReaction>
</comment>
<comment type="catalytic activity">
    <reaction evidence="4">
        <text>(2E,8Z,11Z,14Z)-eicosatetraenoyl-CoA + NADPH + H(+) = (8Z,11Z,14Z)-eicosatrienoyl-CoA + NADP(+)</text>
        <dbReference type="Rhea" id="RHEA:39319"/>
        <dbReference type="ChEBI" id="CHEBI:15378"/>
        <dbReference type="ChEBI" id="CHEBI:57783"/>
        <dbReference type="ChEBI" id="CHEBI:58349"/>
        <dbReference type="ChEBI" id="CHEBI:74264"/>
        <dbReference type="ChEBI" id="CHEBI:76412"/>
    </reaction>
    <physiologicalReaction direction="left-to-right" evidence="12">
        <dbReference type="Rhea" id="RHEA:39320"/>
    </physiologicalReaction>
</comment>
<comment type="catalytic activity">
    <reaction evidence="7 8">
        <text>(2E)-hexadecenoyl-CoA + NADPH + H(+) = hexadecanoyl-CoA + NADP(+)</text>
        <dbReference type="Rhea" id="RHEA:36143"/>
        <dbReference type="ChEBI" id="CHEBI:15378"/>
        <dbReference type="ChEBI" id="CHEBI:57379"/>
        <dbReference type="ChEBI" id="CHEBI:57783"/>
        <dbReference type="ChEBI" id="CHEBI:58349"/>
        <dbReference type="ChEBI" id="CHEBI:61526"/>
    </reaction>
    <physiologicalReaction direction="left-to-right" evidence="13 14">
        <dbReference type="Rhea" id="RHEA:36144"/>
    </physiologicalReaction>
</comment>
<comment type="pathway">
    <text evidence="4 7 8">Lipid metabolism; fatty acid biosynthesis.</text>
</comment>
<comment type="pathway">
    <text evidence="8">Lipid metabolism; sphingolipid metabolism.</text>
</comment>
<comment type="subunit">
    <text evidence="5 9">Interacts with ELOVL1 and LASS2 (PubMed:20937905). Interacts with HACD1 and HACD2 (via the third lumenal loop), but not with HACD3 and HACD4 (PubMed:38422897). Interacts with ELOVL1, ELOVL2, ELOVL3, ELOVL5 and ELOVL7 in the presence of acyl-CoA; interaction with HACD1/2 and that with ELOVLs are mutually exclusive (PubMed:38422897).</text>
</comment>
<comment type="interaction">
    <interactant intactId="EBI-2877718">
        <id>Q9NZ01</id>
    </interactant>
    <interactant intactId="EBI-11343438">
        <id>Q3SXY8</id>
        <label>ARL13B</label>
    </interactant>
    <organismsDiffer>false</organismsDiffer>
    <experiments>3</experiments>
</comment>
<comment type="interaction">
    <interactant intactId="EBI-2877718">
        <id>Q9NZ01</id>
    </interactant>
    <interactant intactId="EBI-7797864">
        <id>P11912</id>
        <label>CD79A</label>
    </interactant>
    <organismsDiffer>false</organismsDiffer>
    <experiments>3</experiments>
</comment>
<comment type="interaction">
    <interactant intactId="EBI-2877718">
        <id>Q9NZ01</id>
    </interactant>
    <interactant intactId="EBI-18400628">
        <id>O00501</id>
        <label>CLDN5</label>
    </interactant>
    <organismsDiffer>false</organismsDiffer>
    <experiments>3</experiments>
</comment>
<comment type="interaction">
    <interactant intactId="EBI-2877718">
        <id>Q9NZ01</id>
    </interactant>
    <interactant intactId="EBI-17233035">
        <id>Q9BUF7-2</id>
        <label>CRB3</label>
    </interactant>
    <organismsDiffer>false</organismsDiffer>
    <experiments>3</experiments>
</comment>
<comment type="interaction">
    <interactant intactId="EBI-2877718">
        <id>Q9NZ01</id>
    </interactant>
    <interactant intactId="EBI-6942903">
        <id>Q96BA8</id>
        <label>CREB3L1</label>
    </interactant>
    <organismsDiffer>false</organismsDiffer>
    <experiments>3</experiments>
</comment>
<comment type="interaction">
    <interactant intactId="EBI-2877718">
        <id>Q9NZ01</id>
    </interactant>
    <interactant intactId="EBI-18535450">
        <id>Q9GZR5</id>
        <label>ELOVL4</label>
    </interactant>
    <organismsDiffer>false</organismsDiffer>
    <experiments>3</experiments>
</comment>
<comment type="interaction">
    <interactant intactId="EBI-2877718">
        <id>Q9NZ01</id>
    </interactant>
    <interactant intactId="EBI-781551">
        <id>Q9Y282</id>
        <label>ERGIC3</label>
    </interactant>
    <organismsDiffer>false</organismsDiffer>
    <experiments>3</experiments>
</comment>
<comment type="interaction">
    <interactant intactId="EBI-2877718">
        <id>Q9NZ01</id>
    </interactant>
    <interactant intactId="EBI-18304435">
        <id>Q5JX71</id>
        <label>FAM209A</label>
    </interactant>
    <organismsDiffer>false</organismsDiffer>
    <experiments>3</experiments>
</comment>
<comment type="interaction">
    <interactant intactId="EBI-2877718">
        <id>Q9NZ01</id>
    </interactant>
    <interactant intactId="EBI-18908258">
        <id>O00258</id>
        <label>GET1</label>
    </interactant>
    <organismsDiffer>false</organismsDiffer>
    <experiments>3</experiments>
</comment>
<comment type="interaction">
    <interactant intactId="EBI-2877718">
        <id>Q9NZ01</id>
    </interactant>
    <interactant intactId="EBI-17231387">
        <id>Q6ZVE7</id>
        <label>GOLT1A</label>
    </interactant>
    <organismsDiffer>false</organismsDiffer>
    <experiments>3</experiments>
</comment>
<comment type="interaction">
    <interactant intactId="EBI-2877718">
        <id>Q9NZ01</id>
    </interactant>
    <interactant intactId="EBI-12051643">
        <id>B0YJ81</id>
        <label>HACD1</label>
    </interactant>
    <organismsDiffer>false</organismsDiffer>
    <experiments>3</experiments>
</comment>
<comment type="interaction">
    <interactant intactId="EBI-2877718">
        <id>Q9NZ01</id>
    </interactant>
    <interactant intactId="EBI-530257">
        <id>Q6Y1H2</id>
        <label>HACD2</label>
    </interactant>
    <organismsDiffer>false</organismsDiffer>
    <experiments>7</experiments>
</comment>
<comment type="interaction">
    <interactant intactId="EBI-2877718">
        <id>Q9NZ01</id>
    </interactant>
    <interactant intactId="EBI-10266796">
        <id>Q8N5M9</id>
        <label>JAGN1</label>
    </interactant>
    <organismsDiffer>false</organismsDiffer>
    <experiments>3</experiments>
</comment>
<comment type="interaction">
    <interactant intactId="EBI-2877718">
        <id>Q9NZ01</id>
    </interactant>
    <interactant intactId="EBI-373355">
        <id>Q5SR56</id>
        <label>MFSD14B</label>
    </interactant>
    <organismsDiffer>false</organismsDiffer>
    <experiments>3</experiments>
</comment>
<comment type="interaction">
    <interactant intactId="EBI-2877718">
        <id>Q9NZ01</id>
    </interactant>
    <interactant intactId="EBI-6163737">
        <id>Q8N4V1</id>
        <label>MMGT1</label>
    </interactant>
    <organismsDiffer>false</organismsDiffer>
    <experiments>3</experiments>
</comment>
<comment type="interaction">
    <interactant intactId="EBI-2877718">
        <id>Q9NZ01</id>
    </interactant>
    <interactant intactId="EBI-17263240">
        <id>P15941-11</id>
        <label>MUC1</label>
    </interactant>
    <organismsDiffer>false</organismsDiffer>
    <experiments>3</experiments>
</comment>
<comment type="interaction">
    <interactant intactId="EBI-2877718">
        <id>Q9NZ01</id>
    </interactant>
    <interactant intactId="EBI-1050125">
        <id>O15173</id>
        <label>PGRMC2</label>
    </interactant>
    <organismsDiffer>false</organismsDiffer>
    <experiments>3</experiments>
</comment>
<comment type="interaction">
    <interactant intactId="EBI-2877718">
        <id>Q9NZ01</id>
    </interactant>
    <interactant intactId="EBI-10192441">
        <id>Q86VR2</id>
        <label>RETREG3</label>
    </interactant>
    <organismsDiffer>false</organismsDiffer>
    <experiments>3</experiments>
</comment>
<comment type="interaction">
    <interactant intactId="EBI-2877718">
        <id>Q9NZ01</id>
    </interactant>
    <interactant intactId="EBI-18159983">
        <id>Q3KNW5</id>
        <label>SLC10A6</label>
    </interactant>
    <organismsDiffer>false</organismsDiffer>
    <experiments>3</experiments>
</comment>
<comment type="interaction">
    <interactant intactId="EBI-2877718">
        <id>Q9NZ01</id>
    </interactant>
    <interactant intactId="EBI-5235586">
        <id>Q8TBB6</id>
        <label>SLC7A14</label>
    </interactant>
    <organismsDiffer>false</organismsDiffer>
    <experiments>3</experiments>
</comment>
<comment type="interaction">
    <interactant intactId="EBI-2877718">
        <id>Q9NZ01</id>
    </interactant>
    <interactant intactId="EBI-2800345">
        <id>Q86WV6</id>
        <label>STING1</label>
    </interactant>
    <organismsDiffer>false</organismsDiffer>
    <experiments>3</experiments>
</comment>
<comment type="interaction">
    <interactant intactId="EBI-2877718">
        <id>Q9NZ01</id>
    </interactant>
    <interactant intactId="EBI-1211440">
        <id>P27105</id>
        <label>STOM</label>
    </interactant>
    <organismsDiffer>false</organismsDiffer>
    <experiments>3</experiments>
</comment>
<comment type="interaction">
    <interactant intactId="EBI-2877718">
        <id>Q9NZ01</id>
    </interactant>
    <interactant intactId="EBI-1049924">
        <id>Q00059</id>
        <label>TFAM</label>
    </interactant>
    <organismsDiffer>false</organismsDiffer>
    <experiments>3</experiments>
</comment>
<comment type="interaction">
    <interactant intactId="EBI-2877718">
        <id>Q9NZ01</id>
    </interactant>
    <interactant intactId="EBI-1055364">
        <id>Q3ZAQ7</id>
        <label>VMA21</label>
    </interactant>
    <organismsDiffer>false</organismsDiffer>
    <experiments>3</experiments>
</comment>
<comment type="subcellular location">
    <subcellularLocation>
        <location evidence="4 7">Endoplasmic reticulum membrane</location>
        <topology evidence="3">Multi-pass membrane protein</topology>
    </subcellularLocation>
</comment>
<comment type="alternative products">
    <event type="alternative splicing"/>
    <isoform>
        <id>Q9NZ01-1</id>
        <name>1</name>
        <sequence type="displayed"/>
    </isoform>
    <isoform>
        <id>Q9NZ01-2</id>
        <name>2</name>
        <sequence type="described" ref="VSP_005957"/>
    </isoform>
</comment>
<comment type="tissue specificity">
    <text evidence="4">Expressed in most tissues tested. Highly expressed in skeletal muscle.</text>
</comment>
<comment type="PTM">
    <text evidence="1">Glycosylated.</text>
</comment>
<comment type="disease" evidence="6 7">
    <disease id="DI-03192">
        <name>Intellectual developmental disorder, autosomal recessive 14</name>
        <acronym>MRT14</acronym>
        <description>A disorder characterized by significantly below average general intellectual functioning associated with impairments in adaptive behavior and manifested during the developmental period.</description>
        <dbReference type="MIM" id="614020"/>
    </disease>
    <text>The disease is caused by variants affecting the gene represented in this entry.</text>
</comment>
<comment type="similarity">
    <text evidence="11">Belongs to the steroid 5-alpha reductase family.</text>
</comment>